<sequence>MTVNNEISKAFSKHADDYERVAKVQKEIGSRLFERLQYLKIAPRRILDLGCGPGFFSKELALLYPKAQIVGMDLSFAMLEQARKKQGWRRKWPLVSADMQKMPFATGAFDLVFANQVIHWSSSLGMVFRELNRVMNVNGCLMFTTLGPDTFKELQTAWSAANQYAHVNEFVDMHDIGDCLIAEHFMDPVIDMELLSIHYETLPQLLLALKTQGVRNINPKRNHGLTGKSAWKQFEAQYATMRTTTGKYPLTYEVVYGQAWKGAQRKMEQGIETWIPVSRVVKKS</sequence>
<organism>
    <name type="scientific">Legionella pneumophila subsp. pneumophila (strain Philadelphia 1 / ATCC 33152 / DSM 7513)</name>
    <dbReference type="NCBI Taxonomy" id="272624"/>
    <lineage>
        <taxon>Bacteria</taxon>
        <taxon>Pseudomonadati</taxon>
        <taxon>Pseudomonadota</taxon>
        <taxon>Gammaproteobacteria</taxon>
        <taxon>Legionellales</taxon>
        <taxon>Legionellaceae</taxon>
        <taxon>Legionella</taxon>
    </lineage>
</organism>
<keyword id="KW-0093">Biotin biosynthesis</keyword>
<keyword id="KW-0489">Methyltransferase</keyword>
<keyword id="KW-1185">Reference proteome</keyword>
<keyword id="KW-0949">S-adenosyl-L-methionine</keyword>
<keyword id="KW-0808">Transferase</keyword>
<gene>
    <name evidence="1" type="primary">bioC</name>
    <name type="ordered locus">lpg2331</name>
</gene>
<evidence type="ECO:0000255" key="1">
    <source>
        <dbReference type="HAMAP-Rule" id="MF_00835"/>
    </source>
</evidence>
<evidence type="ECO:0000305" key="2"/>
<protein>
    <recommendedName>
        <fullName evidence="1">Malonyl-[acyl-carrier protein] O-methyltransferase</fullName>
        <shortName evidence="1">Malonyl-ACP O-methyltransferase</shortName>
        <ecNumber evidence="1">2.1.1.197</ecNumber>
    </recommendedName>
    <alternativeName>
        <fullName evidence="1">Biotin synthesis protein BioC</fullName>
    </alternativeName>
</protein>
<proteinExistence type="inferred from homology"/>
<comment type="function">
    <text evidence="1">Converts the free carboxyl group of a malonyl-thioester to its methyl ester by transfer of a methyl group from S-adenosyl-L-methionine (SAM). It allows to synthesize pimeloyl-ACP via the fatty acid synthetic pathway.</text>
</comment>
<comment type="catalytic activity">
    <reaction evidence="1">
        <text>malonyl-[ACP] + S-adenosyl-L-methionine = malonyl-[ACP] methyl ester + S-adenosyl-L-homocysteine</text>
        <dbReference type="Rhea" id="RHEA:17105"/>
        <dbReference type="Rhea" id="RHEA-COMP:9623"/>
        <dbReference type="Rhea" id="RHEA-COMP:9954"/>
        <dbReference type="ChEBI" id="CHEBI:57856"/>
        <dbReference type="ChEBI" id="CHEBI:59789"/>
        <dbReference type="ChEBI" id="CHEBI:78449"/>
        <dbReference type="ChEBI" id="CHEBI:78845"/>
        <dbReference type="EC" id="2.1.1.197"/>
    </reaction>
</comment>
<comment type="pathway">
    <text evidence="1">Cofactor biosynthesis; biotin biosynthesis.</text>
</comment>
<comment type="similarity">
    <text evidence="1">Belongs to the methyltransferase superfamily.</text>
</comment>
<comment type="sequence caution" evidence="2">
    <conflict type="erroneous initiation">
        <sequence resource="EMBL-CDS" id="AAU28393"/>
    </conflict>
    <text>Extended N-terminus.</text>
</comment>
<dbReference type="EC" id="2.1.1.197" evidence="1"/>
<dbReference type="EMBL" id="AE017354">
    <property type="protein sequence ID" value="AAU28393.1"/>
    <property type="status" value="ALT_INIT"/>
    <property type="molecule type" value="Genomic_DNA"/>
</dbReference>
<dbReference type="RefSeq" id="WP_015444137.1">
    <property type="nucleotide sequence ID" value="NC_002942.5"/>
</dbReference>
<dbReference type="RefSeq" id="YP_096340.1">
    <property type="nucleotide sequence ID" value="NC_002942.5"/>
</dbReference>
<dbReference type="SMR" id="Q5ZT34"/>
<dbReference type="STRING" id="272624.lpg2331"/>
<dbReference type="PaxDb" id="272624-lpg2331"/>
<dbReference type="DNASU" id="3080625"/>
<dbReference type="GeneID" id="57036323"/>
<dbReference type="KEGG" id="lpn:lpg2331"/>
<dbReference type="PATRIC" id="fig|272624.6.peg.2448"/>
<dbReference type="eggNOG" id="COG2226">
    <property type="taxonomic scope" value="Bacteria"/>
</dbReference>
<dbReference type="HOGENOM" id="CLU_046586_2_1_6"/>
<dbReference type="OrthoDB" id="9760689at2"/>
<dbReference type="UniPathway" id="UPA00078"/>
<dbReference type="Proteomes" id="UP000000609">
    <property type="component" value="Chromosome"/>
</dbReference>
<dbReference type="GO" id="GO:0010340">
    <property type="term" value="F:carboxyl-O-methyltransferase activity"/>
    <property type="evidence" value="ECO:0007669"/>
    <property type="project" value="UniProtKB-UniRule"/>
</dbReference>
<dbReference type="GO" id="GO:0102130">
    <property type="term" value="F:malonyl-CoA methyltransferase activity"/>
    <property type="evidence" value="ECO:0007669"/>
    <property type="project" value="UniProtKB-EC"/>
</dbReference>
<dbReference type="GO" id="GO:0008757">
    <property type="term" value="F:S-adenosylmethionine-dependent methyltransferase activity"/>
    <property type="evidence" value="ECO:0007669"/>
    <property type="project" value="InterPro"/>
</dbReference>
<dbReference type="GO" id="GO:0009102">
    <property type="term" value="P:biotin biosynthetic process"/>
    <property type="evidence" value="ECO:0007669"/>
    <property type="project" value="UniProtKB-UniRule"/>
</dbReference>
<dbReference type="GO" id="GO:0032259">
    <property type="term" value="P:methylation"/>
    <property type="evidence" value="ECO:0007669"/>
    <property type="project" value="UniProtKB-KW"/>
</dbReference>
<dbReference type="CDD" id="cd02440">
    <property type="entry name" value="AdoMet_MTases"/>
    <property type="match status" value="1"/>
</dbReference>
<dbReference type="Gene3D" id="3.40.50.150">
    <property type="entry name" value="Vaccinia Virus protein VP39"/>
    <property type="match status" value="1"/>
</dbReference>
<dbReference type="HAMAP" id="MF_00835">
    <property type="entry name" value="BioC"/>
    <property type="match status" value="1"/>
</dbReference>
<dbReference type="InterPro" id="IPR011814">
    <property type="entry name" value="BioC"/>
</dbReference>
<dbReference type="InterPro" id="IPR050602">
    <property type="entry name" value="Malonyl-ACP_OMT"/>
</dbReference>
<dbReference type="InterPro" id="IPR013216">
    <property type="entry name" value="Methyltransf_11"/>
</dbReference>
<dbReference type="InterPro" id="IPR029063">
    <property type="entry name" value="SAM-dependent_MTases_sf"/>
</dbReference>
<dbReference type="NCBIfam" id="TIGR02072">
    <property type="entry name" value="BioC"/>
    <property type="match status" value="1"/>
</dbReference>
<dbReference type="PANTHER" id="PTHR13090">
    <property type="entry name" value="ARGININE-HYDROXYLASE NDUFAF5, MITOCHONDRIAL"/>
    <property type="match status" value="1"/>
</dbReference>
<dbReference type="PANTHER" id="PTHR13090:SF1">
    <property type="entry name" value="ARGININE-HYDROXYLASE NDUFAF5, MITOCHONDRIAL"/>
    <property type="match status" value="1"/>
</dbReference>
<dbReference type="Pfam" id="PF08241">
    <property type="entry name" value="Methyltransf_11"/>
    <property type="match status" value="1"/>
</dbReference>
<dbReference type="SUPFAM" id="SSF53335">
    <property type="entry name" value="S-adenosyl-L-methionine-dependent methyltransferases"/>
    <property type="match status" value="1"/>
</dbReference>
<name>BIOC_LEGPH</name>
<reference key="1">
    <citation type="journal article" date="2004" name="Science">
        <title>The genomic sequence of the accidental pathogen Legionella pneumophila.</title>
        <authorList>
            <person name="Chien M."/>
            <person name="Morozova I."/>
            <person name="Shi S."/>
            <person name="Sheng H."/>
            <person name="Chen J."/>
            <person name="Gomez S.M."/>
            <person name="Asamani G."/>
            <person name="Hill K."/>
            <person name="Nuara J."/>
            <person name="Feder M."/>
            <person name="Rineer J."/>
            <person name="Greenberg J.J."/>
            <person name="Steshenko V."/>
            <person name="Park S.H."/>
            <person name="Zhao B."/>
            <person name="Teplitskaya E."/>
            <person name="Edwards J.R."/>
            <person name="Pampou S."/>
            <person name="Georghiou A."/>
            <person name="Chou I.-C."/>
            <person name="Iannuccilli W."/>
            <person name="Ulz M.E."/>
            <person name="Kim D.H."/>
            <person name="Geringer-Sameth A."/>
            <person name="Goldsberry C."/>
            <person name="Morozov P."/>
            <person name="Fischer S.G."/>
            <person name="Segal G."/>
            <person name="Qu X."/>
            <person name="Rzhetsky A."/>
            <person name="Zhang P."/>
            <person name="Cayanis E."/>
            <person name="De Jong P.J."/>
            <person name="Ju J."/>
            <person name="Kalachikov S."/>
            <person name="Shuman H.A."/>
            <person name="Russo J.J."/>
        </authorList>
    </citation>
    <scope>NUCLEOTIDE SEQUENCE [LARGE SCALE GENOMIC DNA]</scope>
    <source>
        <strain>Philadelphia 1 / ATCC 33152 / DSM 7513</strain>
    </source>
</reference>
<feature type="chain" id="PRO_0000412508" description="Malonyl-[acyl-carrier protein] O-methyltransferase">
    <location>
        <begin position="1"/>
        <end position="284"/>
    </location>
</feature>
<accession>Q5ZT34</accession>